<gene>
    <name evidence="1" type="primary">purH</name>
    <name type="ordered locus">CLI_2931</name>
</gene>
<keyword id="KW-0378">Hydrolase</keyword>
<keyword id="KW-0511">Multifunctional enzyme</keyword>
<keyword id="KW-0658">Purine biosynthesis</keyword>
<keyword id="KW-0808">Transferase</keyword>
<name>PUR9_CLOBL</name>
<reference key="1">
    <citation type="submission" date="2007-06" db="EMBL/GenBank/DDBJ databases">
        <authorList>
            <person name="Brinkac L.M."/>
            <person name="Daugherty S."/>
            <person name="Dodson R.J."/>
            <person name="Madupu R."/>
            <person name="Brown J.L."/>
            <person name="Bruce D."/>
            <person name="Detter C."/>
            <person name="Munk C."/>
            <person name="Smith L.A."/>
            <person name="Smith T.J."/>
            <person name="White O."/>
            <person name="Brettin T.S."/>
        </authorList>
    </citation>
    <scope>NUCLEOTIDE SEQUENCE [LARGE SCALE GENOMIC DNA]</scope>
    <source>
        <strain>Langeland / NCTC 10281 / Type F</strain>
    </source>
</reference>
<accession>A7GH96</accession>
<evidence type="ECO:0000255" key="1">
    <source>
        <dbReference type="HAMAP-Rule" id="MF_00139"/>
    </source>
</evidence>
<evidence type="ECO:0000255" key="2">
    <source>
        <dbReference type="PROSITE-ProRule" id="PRU01202"/>
    </source>
</evidence>
<comment type="catalytic activity">
    <reaction evidence="1">
        <text>(6R)-10-formyltetrahydrofolate + 5-amino-1-(5-phospho-beta-D-ribosyl)imidazole-4-carboxamide = 5-formamido-1-(5-phospho-D-ribosyl)imidazole-4-carboxamide + (6S)-5,6,7,8-tetrahydrofolate</text>
        <dbReference type="Rhea" id="RHEA:22192"/>
        <dbReference type="ChEBI" id="CHEBI:57453"/>
        <dbReference type="ChEBI" id="CHEBI:58467"/>
        <dbReference type="ChEBI" id="CHEBI:58475"/>
        <dbReference type="ChEBI" id="CHEBI:195366"/>
        <dbReference type="EC" id="2.1.2.3"/>
    </reaction>
</comment>
<comment type="catalytic activity">
    <reaction evidence="1">
        <text>IMP + H2O = 5-formamido-1-(5-phospho-D-ribosyl)imidazole-4-carboxamide</text>
        <dbReference type="Rhea" id="RHEA:18445"/>
        <dbReference type="ChEBI" id="CHEBI:15377"/>
        <dbReference type="ChEBI" id="CHEBI:58053"/>
        <dbReference type="ChEBI" id="CHEBI:58467"/>
        <dbReference type="EC" id="3.5.4.10"/>
    </reaction>
</comment>
<comment type="pathway">
    <text evidence="1">Purine metabolism; IMP biosynthesis via de novo pathway; 5-formamido-1-(5-phospho-D-ribosyl)imidazole-4-carboxamide from 5-amino-1-(5-phospho-D-ribosyl)imidazole-4-carboxamide (10-formyl THF route): step 1/1.</text>
</comment>
<comment type="pathway">
    <text evidence="1">Purine metabolism; IMP biosynthesis via de novo pathway; IMP from 5-formamido-1-(5-phospho-D-ribosyl)imidazole-4-carboxamide: step 1/1.</text>
</comment>
<comment type="domain">
    <text evidence="1">The IMP cyclohydrolase activity resides in the N-terminal region.</text>
</comment>
<comment type="similarity">
    <text evidence="1">Belongs to the PurH family.</text>
</comment>
<sequence>MIKRALISVFDKTGILDLAKFLESRDVEIISTGGTYKHLKENGVKVIDIEEVTGFPEMLDGRVKTLNPLIHGGILAIRDNEEHMKVIEEKGINPIDMVVVNLYPFFNKVEENLSFDEKVEFIDIGGPTMIRAAAKNFKDVVVLTDTKDYENVIDEIKENDQVNIKTRKKLAGKVFNLMSAYDAAISNFLLEEEYPEYLTLSYKKNIDLRYGENPHQTAAYYTSTVGKYPMKNFEKLNGKELSYNNIKDMDIAWKTVCEFEEVACCALKHNTPCGVAIGDTVQEVYTKAYECDLISIFGGIVAFNRKVDKETAENLAKIFLEIVVAPDFDEDALEVLKNKKNLRVIKCEEKSTEGKDMAKVDGGILVQKSDNKLLEDTKVVTEKSPTEQEMKDLIFGMKVVKYVKSNAIVVVKDGMAKGIGGGQVNRIWAAKEALDRAGDGVVLASDAFFPFGDVAEEAAKWGIKAIIQPGGSIRDEESIKVCNEKGISMVFTGIRHFKH</sequence>
<dbReference type="EC" id="2.1.2.3" evidence="1"/>
<dbReference type="EC" id="3.5.4.10" evidence="1"/>
<dbReference type="EMBL" id="CP000728">
    <property type="protein sequence ID" value="ABS39608.1"/>
    <property type="molecule type" value="Genomic_DNA"/>
</dbReference>
<dbReference type="RefSeq" id="WP_012100665.1">
    <property type="nucleotide sequence ID" value="NC_009699.1"/>
</dbReference>
<dbReference type="SMR" id="A7GH96"/>
<dbReference type="KEGG" id="cbf:CLI_2931"/>
<dbReference type="HOGENOM" id="CLU_016316_5_2_9"/>
<dbReference type="UniPathway" id="UPA00074">
    <property type="reaction ID" value="UER00133"/>
</dbReference>
<dbReference type="UniPathway" id="UPA00074">
    <property type="reaction ID" value="UER00135"/>
</dbReference>
<dbReference type="Proteomes" id="UP000002410">
    <property type="component" value="Chromosome"/>
</dbReference>
<dbReference type="GO" id="GO:0005829">
    <property type="term" value="C:cytosol"/>
    <property type="evidence" value="ECO:0007669"/>
    <property type="project" value="TreeGrafter"/>
</dbReference>
<dbReference type="GO" id="GO:0003937">
    <property type="term" value="F:IMP cyclohydrolase activity"/>
    <property type="evidence" value="ECO:0007669"/>
    <property type="project" value="UniProtKB-UniRule"/>
</dbReference>
<dbReference type="GO" id="GO:0004643">
    <property type="term" value="F:phosphoribosylaminoimidazolecarboxamide formyltransferase activity"/>
    <property type="evidence" value="ECO:0007669"/>
    <property type="project" value="UniProtKB-UniRule"/>
</dbReference>
<dbReference type="GO" id="GO:0006189">
    <property type="term" value="P:'de novo' IMP biosynthetic process"/>
    <property type="evidence" value="ECO:0007669"/>
    <property type="project" value="UniProtKB-UniRule"/>
</dbReference>
<dbReference type="CDD" id="cd01421">
    <property type="entry name" value="IMPCH"/>
    <property type="match status" value="1"/>
</dbReference>
<dbReference type="FunFam" id="3.40.140.20:FF:000001">
    <property type="entry name" value="Bifunctional purine biosynthesis protein PurH"/>
    <property type="match status" value="1"/>
</dbReference>
<dbReference type="FunFam" id="3.40.140.20:FF:000002">
    <property type="entry name" value="Bifunctional purine biosynthesis protein PurH"/>
    <property type="match status" value="1"/>
</dbReference>
<dbReference type="FunFam" id="3.40.50.1380:FF:000001">
    <property type="entry name" value="Bifunctional purine biosynthesis protein PurH"/>
    <property type="match status" value="1"/>
</dbReference>
<dbReference type="Gene3D" id="3.40.140.20">
    <property type="match status" value="2"/>
</dbReference>
<dbReference type="Gene3D" id="3.40.50.1380">
    <property type="entry name" value="Methylglyoxal synthase-like domain"/>
    <property type="match status" value="1"/>
</dbReference>
<dbReference type="HAMAP" id="MF_00139">
    <property type="entry name" value="PurH"/>
    <property type="match status" value="1"/>
</dbReference>
<dbReference type="InterPro" id="IPR024051">
    <property type="entry name" value="AICAR_Tfase_dup_dom_sf"/>
</dbReference>
<dbReference type="InterPro" id="IPR016193">
    <property type="entry name" value="Cytidine_deaminase-like"/>
</dbReference>
<dbReference type="InterPro" id="IPR011607">
    <property type="entry name" value="MGS-like_dom"/>
</dbReference>
<dbReference type="InterPro" id="IPR036914">
    <property type="entry name" value="MGS-like_dom_sf"/>
</dbReference>
<dbReference type="InterPro" id="IPR002695">
    <property type="entry name" value="PurH-like"/>
</dbReference>
<dbReference type="NCBIfam" id="NF002049">
    <property type="entry name" value="PRK00881.1"/>
    <property type="match status" value="1"/>
</dbReference>
<dbReference type="NCBIfam" id="TIGR00355">
    <property type="entry name" value="purH"/>
    <property type="match status" value="1"/>
</dbReference>
<dbReference type="PANTHER" id="PTHR11692:SF0">
    <property type="entry name" value="BIFUNCTIONAL PURINE BIOSYNTHESIS PROTEIN ATIC"/>
    <property type="match status" value="1"/>
</dbReference>
<dbReference type="PANTHER" id="PTHR11692">
    <property type="entry name" value="BIFUNCTIONAL PURINE BIOSYNTHESIS PROTEIN PURH"/>
    <property type="match status" value="1"/>
</dbReference>
<dbReference type="Pfam" id="PF01808">
    <property type="entry name" value="AICARFT_IMPCHas"/>
    <property type="match status" value="1"/>
</dbReference>
<dbReference type="Pfam" id="PF02142">
    <property type="entry name" value="MGS"/>
    <property type="match status" value="1"/>
</dbReference>
<dbReference type="PIRSF" id="PIRSF000414">
    <property type="entry name" value="AICARFT_IMPCHas"/>
    <property type="match status" value="1"/>
</dbReference>
<dbReference type="SMART" id="SM00798">
    <property type="entry name" value="AICARFT_IMPCHas"/>
    <property type="match status" value="1"/>
</dbReference>
<dbReference type="SMART" id="SM00851">
    <property type="entry name" value="MGS"/>
    <property type="match status" value="1"/>
</dbReference>
<dbReference type="SUPFAM" id="SSF53927">
    <property type="entry name" value="Cytidine deaminase-like"/>
    <property type="match status" value="1"/>
</dbReference>
<dbReference type="SUPFAM" id="SSF52335">
    <property type="entry name" value="Methylglyoxal synthase-like"/>
    <property type="match status" value="1"/>
</dbReference>
<dbReference type="PROSITE" id="PS51855">
    <property type="entry name" value="MGS"/>
    <property type="match status" value="1"/>
</dbReference>
<protein>
    <recommendedName>
        <fullName evidence="1">Bifunctional purine biosynthesis protein PurH</fullName>
    </recommendedName>
    <domain>
        <recommendedName>
            <fullName evidence="1">Phosphoribosylaminoimidazolecarboxamide formyltransferase</fullName>
            <ecNumber evidence="1">2.1.2.3</ecNumber>
        </recommendedName>
        <alternativeName>
            <fullName evidence="1">AICAR transformylase</fullName>
        </alternativeName>
    </domain>
    <domain>
        <recommendedName>
            <fullName evidence="1">IMP cyclohydrolase</fullName>
            <ecNumber evidence="1">3.5.4.10</ecNumber>
        </recommendedName>
        <alternativeName>
            <fullName evidence="1">ATIC</fullName>
        </alternativeName>
        <alternativeName>
            <fullName evidence="1">IMP synthase</fullName>
        </alternativeName>
        <alternativeName>
            <fullName evidence="1">Inosinicase</fullName>
        </alternativeName>
    </domain>
</protein>
<proteinExistence type="inferred from homology"/>
<organism>
    <name type="scientific">Clostridium botulinum (strain Langeland / NCTC 10281 / Type F)</name>
    <dbReference type="NCBI Taxonomy" id="441772"/>
    <lineage>
        <taxon>Bacteria</taxon>
        <taxon>Bacillati</taxon>
        <taxon>Bacillota</taxon>
        <taxon>Clostridia</taxon>
        <taxon>Eubacteriales</taxon>
        <taxon>Clostridiaceae</taxon>
        <taxon>Clostridium</taxon>
    </lineage>
</organism>
<feature type="chain" id="PRO_1000018877" description="Bifunctional purine biosynthesis protein PurH">
    <location>
        <begin position="1"/>
        <end position="499"/>
    </location>
</feature>
<feature type="domain" description="MGS-like" evidence="2">
    <location>
        <begin position="1"/>
        <end position="144"/>
    </location>
</feature>